<accession>P37289</accession>
<comment type="function">
    <text evidence="1">Receptor for prostaglandin F2-alpha (PGF2-alpha). The activity of this receptor is mediated by G proteins which activate a phosphatidylinositol-calcium second messenger system. Initiates luteolysis in the corpus luteum (By similarity).</text>
</comment>
<comment type="subcellular location">
    <subcellularLocation>
        <location>Cell membrane</location>
        <topology>Multi-pass membrane protein</topology>
    </subcellularLocation>
</comment>
<comment type="similarity">
    <text evidence="3">Belongs to the G-protein coupled receptor 1 family.</text>
</comment>
<keyword id="KW-1003">Cell membrane</keyword>
<keyword id="KW-1015">Disulfide bond</keyword>
<keyword id="KW-0297">G-protein coupled receptor</keyword>
<keyword id="KW-0325">Glycoprotein</keyword>
<keyword id="KW-0472">Membrane</keyword>
<keyword id="KW-0675">Receptor</keyword>
<keyword id="KW-1185">Reference proteome</keyword>
<keyword id="KW-0807">Transducer</keyword>
<keyword id="KW-0812">Transmembrane</keyword>
<keyword id="KW-1133">Transmembrane helix</keyword>
<reference key="1">
    <citation type="journal article" date="1994" name="J. Biol. Chem.">
        <title>Molecular cloning and expression of a cDNA of the bovine prostaglandin F2 alpha receptor.</title>
        <authorList>
            <person name="Sakamoto K."/>
            <person name="Ezashi T."/>
            <person name="Miwa K."/>
            <person name="Okuda-Ashitaka E."/>
            <person name="Houtani T."/>
            <person name="Sugimoto T."/>
            <person name="Ito S."/>
            <person name="Hayaishi O."/>
        </authorList>
    </citation>
    <scope>NUCLEOTIDE SEQUENCE [MRNA]</scope>
    <source>
        <tissue>Corpus luteum</tissue>
    </source>
</reference>
<reference key="2">
    <citation type="journal article" date="1997" name="Gene">
        <title>Genomic organization and characterization of the gene encoding bovine prostaglandin F2alpha receptor.</title>
        <authorList>
            <person name="Ezashi T."/>
            <person name="Sakamoto K."/>
            <person name="Miwa K."/>
            <person name="Okuda-Ashitaka E."/>
            <person name="Ito S."/>
            <person name="Hayaishi O."/>
        </authorList>
    </citation>
    <scope>NUCLEOTIDE SEQUENCE [GENOMIC DNA]</scope>
    <source>
        <tissue>Liver</tissue>
    </source>
</reference>
<organism>
    <name type="scientific">Bos taurus</name>
    <name type="common">Bovine</name>
    <dbReference type="NCBI Taxonomy" id="9913"/>
    <lineage>
        <taxon>Eukaryota</taxon>
        <taxon>Metazoa</taxon>
        <taxon>Chordata</taxon>
        <taxon>Craniata</taxon>
        <taxon>Vertebrata</taxon>
        <taxon>Euteleostomi</taxon>
        <taxon>Mammalia</taxon>
        <taxon>Eutheria</taxon>
        <taxon>Laurasiatheria</taxon>
        <taxon>Artiodactyla</taxon>
        <taxon>Ruminantia</taxon>
        <taxon>Pecora</taxon>
        <taxon>Bovidae</taxon>
        <taxon>Bovinae</taxon>
        <taxon>Bos</taxon>
    </lineage>
</organism>
<evidence type="ECO:0000250" key="1"/>
<evidence type="ECO:0000255" key="2"/>
<evidence type="ECO:0000255" key="3">
    <source>
        <dbReference type="PROSITE-ProRule" id="PRU00521"/>
    </source>
</evidence>
<evidence type="ECO:0000305" key="4"/>
<dbReference type="EMBL" id="D17395">
    <property type="protein sequence ID" value="BAA04218.1"/>
    <property type="molecule type" value="mRNA"/>
</dbReference>
<dbReference type="EMBL" id="D89039">
    <property type="protein sequence ID" value="BAA20871.1"/>
    <property type="molecule type" value="Genomic_DNA"/>
</dbReference>
<dbReference type="PIR" id="A53058">
    <property type="entry name" value="A53058"/>
</dbReference>
<dbReference type="RefSeq" id="NP_851368.1">
    <property type="nucleotide sequence ID" value="NM_181025.3"/>
</dbReference>
<dbReference type="RefSeq" id="XP_005204428.1">
    <property type="nucleotide sequence ID" value="XM_005204371.3"/>
</dbReference>
<dbReference type="SMR" id="P37289"/>
<dbReference type="FunCoup" id="P37289">
    <property type="interactions" value="309"/>
</dbReference>
<dbReference type="STRING" id="9913.ENSBTAP00000041321"/>
<dbReference type="BindingDB" id="P37289"/>
<dbReference type="ChEMBL" id="CHEMBL4820"/>
<dbReference type="DrugCentral" id="P37289"/>
<dbReference type="GlyCosmos" id="P37289">
    <property type="glycosylation" value="2 sites, No reported glycans"/>
</dbReference>
<dbReference type="GlyGen" id="P37289">
    <property type="glycosylation" value="2 sites"/>
</dbReference>
<dbReference type="PaxDb" id="9913-ENSBTAP00000041321"/>
<dbReference type="GeneID" id="282020"/>
<dbReference type="KEGG" id="bta:282020"/>
<dbReference type="CTD" id="5737"/>
<dbReference type="eggNOG" id="KOG3656">
    <property type="taxonomic scope" value="Eukaryota"/>
</dbReference>
<dbReference type="InParanoid" id="P37289"/>
<dbReference type="OrthoDB" id="5959154at2759"/>
<dbReference type="TreeFam" id="TF324982"/>
<dbReference type="PRO" id="PR:P37289"/>
<dbReference type="Proteomes" id="UP000009136">
    <property type="component" value="Unplaced"/>
</dbReference>
<dbReference type="GO" id="GO:0005886">
    <property type="term" value="C:plasma membrane"/>
    <property type="evidence" value="ECO:0000318"/>
    <property type="project" value="GO_Central"/>
</dbReference>
<dbReference type="GO" id="GO:0004958">
    <property type="term" value="F:prostaglandin F receptor activity"/>
    <property type="evidence" value="ECO:0000318"/>
    <property type="project" value="GO_Central"/>
</dbReference>
<dbReference type="GO" id="GO:0007189">
    <property type="term" value="P:adenylate cyclase-activating G protein-coupled receptor signaling pathway"/>
    <property type="evidence" value="ECO:0000318"/>
    <property type="project" value="GO_Central"/>
</dbReference>
<dbReference type="GO" id="GO:0006954">
    <property type="term" value="P:inflammatory response"/>
    <property type="evidence" value="ECO:0000318"/>
    <property type="project" value="GO_Central"/>
</dbReference>
<dbReference type="GO" id="GO:0007204">
    <property type="term" value="P:positive regulation of cytosolic calcium ion concentration"/>
    <property type="evidence" value="ECO:0000318"/>
    <property type="project" value="GO_Central"/>
</dbReference>
<dbReference type="CDD" id="cd15145">
    <property type="entry name" value="7tmA_FP"/>
    <property type="match status" value="1"/>
</dbReference>
<dbReference type="FunFam" id="1.20.1070.10:FF:000129">
    <property type="entry name" value="Prostaglandin F2-alpha receptor"/>
    <property type="match status" value="1"/>
</dbReference>
<dbReference type="Gene3D" id="1.20.1070.10">
    <property type="entry name" value="Rhodopsin 7-helix transmembrane proteins"/>
    <property type="match status" value="1"/>
</dbReference>
<dbReference type="InterPro" id="IPR000276">
    <property type="entry name" value="GPCR_Rhodpsn"/>
</dbReference>
<dbReference type="InterPro" id="IPR017452">
    <property type="entry name" value="GPCR_Rhodpsn_7TM"/>
</dbReference>
<dbReference type="InterPro" id="IPR000141">
    <property type="entry name" value="PglndnF_rcpt"/>
</dbReference>
<dbReference type="InterPro" id="IPR008365">
    <property type="entry name" value="Prostanoid_rcpt"/>
</dbReference>
<dbReference type="InterPro" id="IPR001244">
    <property type="entry name" value="Prostglndn_DP_rcpt"/>
</dbReference>
<dbReference type="PANTHER" id="PTHR11866">
    <property type="entry name" value="G-PROTEIN COUPLED RECEPTOR FAMILY 1 MEMBER"/>
    <property type="match status" value="1"/>
</dbReference>
<dbReference type="PANTHER" id="PTHR11866:SF4">
    <property type="entry name" value="PROSTAGLANDIN F2-ALPHA RECEPTOR"/>
    <property type="match status" value="1"/>
</dbReference>
<dbReference type="Pfam" id="PF00001">
    <property type="entry name" value="7tm_1"/>
    <property type="match status" value="1"/>
</dbReference>
<dbReference type="PRINTS" id="PR00428">
    <property type="entry name" value="PROSTAGLNDNR"/>
</dbReference>
<dbReference type="PRINTS" id="PR01788">
    <property type="entry name" value="PROSTANOIDR"/>
</dbReference>
<dbReference type="PRINTS" id="PR00855">
    <property type="entry name" value="PRSTNOIDFPR"/>
</dbReference>
<dbReference type="SUPFAM" id="SSF81321">
    <property type="entry name" value="Family A G protein-coupled receptor-like"/>
    <property type="match status" value="1"/>
</dbReference>
<dbReference type="PROSITE" id="PS00237">
    <property type="entry name" value="G_PROTEIN_RECEP_F1_1"/>
    <property type="match status" value="1"/>
</dbReference>
<dbReference type="PROSITE" id="PS50262">
    <property type="entry name" value="G_PROTEIN_RECEP_F1_2"/>
    <property type="match status" value="1"/>
</dbReference>
<proteinExistence type="evidence at transcript level"/>
<sequence>MSTNSSIQPVSPESELLSNTTCQLEEDLSISFSIIFMTVGILSNSLAIAILMKAYQRFRQKYKSSFLLLASALVITDFFGHLINGTIAVFVYASDKDWIYFDKSNILCSIFGICMVFSGLCPLFLGSLMAIERCIGVTKPIFHSTKITTKHVKMMLSGVCFFAVFVALLPILGHRDYKIQASRTWCFYKTDEIKDWEDRFYLLLFAFLGLLALGISFVCNAITGISLLKVKFRSQQHRQGRSHHFEMVIQLLGIMCVSCICWSPFLVTMASIGMNIQDFKDSCERTLFTLRMATWNQILDPWVYILLRKAVLRNLYVCTRRCCGVHVISLHVWELSSIKDSLKVAAISDLPVTEKVTQQTST</sequence>
<feature type="chain" id="PRO_0000070069" description="Prostaglandin F2-alpha receptor">
    <location>
        <begin position="1"/>
        <end position="362"/>
    </location>
</feature>
<feature type="topological domain" description="Extracellular" evidence="2">
    <location>
        <begin position="1"/>
        <end position="31"/>
    </location>
</feature>
<feature type="transmembrane region" description="Helical; Name=1" evidence="2">
    <location>
        <begin position="32"/>
        <end position="54"/>
    </location>
</feature>
<feature type="topological domain" description="Cytoplasmic" evidence="2">
    <location>
        <begin position="55"/>
        <end position="69"/>
    </location>
</feature>
<feature type="transmembrane region" description="Helical; Name=2" evidence="2">
    <location>
        <begin position="70"/>
        <end position="90"/>
    </location>
</feature>
<feature type="topological domain" description="Extracellular" evidence="2">
    <location>
        <begin position="91"/>
        <end position="109"/>
    </location>
</feature>
<feature type="transmembrane region" description="Helical; Name=3" evidence="2">
    <location>
        <begin position="110"/>
        <end position="131"/>
    </location>
</feature>
<feature type="topological domain" description="Cytoplasmic" evidence="2">
    <location>
        <begin position="132"/>
        <end position="152"/>
    </location>
</feature>
<feature type="transmembrane region" description="Helical; Name=4" evidence="2">
    <location>
        <begin position="153"/>
        <end position="175"/>
    </location>
</feature>
<feature type="topological domain" description="Extracellular" evidence="2">
    <location>
        <begin position="176"/>
        <end position="198"/>
    </location>
</feature>
<feature type="transmembrane region" description="Helical; Name=5" evidence="2">
    <location>
        <begin position="199"/>
        <end position="224"/>
    </location>
</feature>
<feature type="topological domain" description="Cytoplasmic" evidence="2">
    <location>
        <begin position="225"/>
        <end position="250"/>
    </location>
</feature>
<feature type="transmembrane region" description="Helical; Name=6" evidence="2">
    <location>
        <begin position="251"/>
        <end position="267"/>
    </location>
</feature>
<feature type="topological domain" description="Extracellular" evidence="2">
    <location>
        <begin position="268"/>
        <end position="285"/>
    </location>
</feature>
<feature type="transmembrane region" description="Helical; Name=7" evidence="2">
    <location>
        <begin position="286"/>
        <end position="307"/>
    </location>
</feature>
<feature type="topological domain" description="Cytoplasmic" evidence="2">
    <location>
        <begin position="308"/>
        <end position="362"/>
    </location>
</feature>
<feature type="glycosylation site" description="N-linked (GlcNAc...) asparagine" evidence="2">
    <location>
        <position position="4"/>
    </location>
</feature>
<feature type="glycosylation site" description="N-linked (GlcNAc...) asparagine" evidence="2">
    <location>
        <position position="19"/>
    </location>
</feature>
<feature type="disulfide bond" evidence="3">
    <location>
        <begin position="108"/>
        <end position="186"/>
    </location>
</feature>
<feature type="sequence conflict" description="In Ref. 2; BAA20871." evidence="4" ref="2">
    <original>D</original>
    <variation>N</variation>
    <location>
        <position position="340"/>
    </location>
</feature>
<gene>
    <name type="primary">PTGFR</name>
</gene>
<name>PF2R_BOVIN</name>
<protein>
    <recommendedName>
        <fullName>Prostaglandin F2-alpha receptor</fullName>
        <shortName>PGF receptor</shortName>
        <shortName>PGF2-alpha receptor</shortName>
    </recommendedName>
    <alternativeName>
        <fullName>Prostanoid FP receptor</fullName>
    </alternativeName>
</protein>